<dbReference type="EC" id="2.7.4.22" evidence="1"/>
<dbReference type="EMBL" id="BX571861">
    <property type="protein sequence ID" value="CAE12969.1"/>
    <property type="molecule type" value="Genomic_DNA"/>
</dbReference>
<dbReference type="RefSeq" id="WP_011145050.1">
    <property type="nucleotide sequence ID" value="NC_005126.1"/>
</dbReference>
<dbReference type="SMR" id="Q7N8P5"/>
<dbReference type="STRING" id="243265.plu0674"/>
<dbReference type="GeneID" id="48846963"/>
<dbReference type="KEGG" id="plu:plu0674"/>
<dbReference type="eggNOG" id="COG0528">
    <property type="taxonomic scope" value="Bacteria"/>
</dbReference>
<dbReference type="HOGENOM" id="CLU_033861_0_0_6"/>
<dbReference type="OrthoDB" id="9807458at2"/>
<dbReference type="UniPathway" id="UPA00159">
    <property type="reaction ID" value="UER00275"/>
</dbReference>
<dbReference type="Proteomes" id="UP000002514">
    <property type="component" value="Chromosome"/>
</dbReference>
<dbReference type="GO" id="GO:0005829">
    <property type="term" value="C:cytosol"/>
    <property type="evidence" value="ECO:0007669"/>
    <property type="project" value="TreeGrafter"/>
</dbReference>
<dbReference type="GO" id="GO:0005524">
    <property type="term" value="F:ATP binding"/>
    <property type="evidence" value="ECO:0007669"/>
    <property type="project" value="UniProtKB-KW"/>
</dbReference>
<dbReference type="GO" id="GO:0033862">
    <property type="term" value="F:UMP kinase activity"/>
    <property type="evidence" value="ECO:0007669"/>
    <property type="project" value="UniProtKB-EC"/>
</dbReference>
<dbReference type="GO" id="GO:0044210">
    <property type="term" value="P:'de novo' CTP biosynthetic process"/>
    <property type="evidence" value="ECO:0007669"/>
    <property type="project" value="UniProtKB-UniRule"/>
</dbReference>
<dbReference type="GO" id="GO:0006225">
    <property type="term" value="P:UDP biosynthetic process"/>
    <property type="evidence" value="ECO:0007669"/>
    <property type="project" value="TreeGrafter"/>
</dbReference>
<dbReference type="CDD" id="cd04254">
    <property type="entry name" value="AAK_UMPK-PyrH-Ec"/>
    <property type="match status" value="1"/>
</dbReference>
<dbReference type="FunFam" id="3.40.1160.10:FF:000001">
    <property type="entry name" value="Uridylate kinase"/>
    <property type="match status" value="1"/>
</dbReference>
<dbReference type="Gene3D" id="3.40.1160.10">
    <property type="entry name" value="Acetylglutamate kinase-like"/>
    <property type="match status" value="1"/>
</dbReference>
<dbReference type="HAMAP" id="MF_01220_B">
    <property type="entry name" value="PyrH_B"/>
    <property type="match status" value="1"/>
</dbReference>
<dbReference type="InterPro" id="IPR036393">
    <property type="entry name" value="AceGlu_kinase-like_sf"/>
</dbReference>
<dbReference type="InterPro" id="IPR001048">
    <property type="entry name" value="Asp/Glu/Uridylate_kinase"/>
</dbReference>
<dbReference type="InterPro" id="IPR011817">
    <property type="entry name" value="Uridylate_kinase"/>
</dbReference>
<dbReference type="InterPro" id="IPR015963">
    <property type="entry name" value="Uridylate_kinase_bac"/>
</dbReference>
<dbReference type="NCBIfam" id="TIGR02075">
    <property type="entry name" value="pyrH_bact"/>
    <property type="match status" value="1"/>
</dbReference>
<dbReference type="PANTHER" id="PTHR42833">
    <property type="entry name" value="URIDYLATE KINASE"/>
    <property type="match status" value="1"/>
</dbReference>
<dbReference type="PANTHER" id="PTHR42833:SF4">
    <property type="entry name" value="URIDYLATE KINASE PUMPKIN, CHLOROPLASTIC"/>
    <property type="match status" value="1"/>
</dbReference>
<dbReference type="Pfam" id="PF00696">
    <property type="entry name" value="AA_kinase"/>
    <property type="match status" value="1"/>
</dbReference>
<dbReference type="PIRSF" id="PIRSF005650">
    <property type="entry name" value="Uridylate_kin"/>
    <property type="match status" value="1"/>
</dbReference>
<dbReference type="SUPFAM" id="SSF53633">
    <property type="entry name" value="Carbamate kinase-like"/>
    <property type="match status" value="1"/>
</dbReference>
<reference key="1">
    <citation type="journal article" date="2003" name="Nat. Biotechnol.">
        <title>The genome sequence of the entomopathogenic bacterium Photorhabdus luminescens.</title>
        <authorList>
            <person name="Duchaud E."/>
            <person name="Rusniok C."/>
            <person name="Frangeul L."/>
            <person name="Buchrieser C."/>
            <person name="Givaudan A."/>
            <person name="Taourit S."/>
            <person name="Bocs S."/>
            <person name="Boursaux-Eude C."/>
            <person name="Chandler M."/>
            <person name="Charles J.-F."/>
            <person name="Dassa E."/>
            <person name="Derose R."/>
            <person name="Derzelle S."/>
            <person name="Freyssinet G."/>
            <person name="Gaudriault S."/>
            <person name="Medigue C."/>
            <person name="Lanois A."/>
            <person name="Powell K."/>
            <person name="Siguier P."/>
            <person name="Vincent R."/>
            <person name="Wingate V."/>
            <person name="Zouine M."/>
            <person name="Glaser P."/>
            <person name="Boemare N."/>
            <person name="Danchin A."/>
            <person name="Kunst F."/>
        </authorList>
    </citation>
    <scope>NUCLEOTIDE SEQUENCE [LARGE SCALE GENOMIC DNA]</scope>
    <source>
        <strain>DSM 15139 / CIP 105565 / TT01</strain>
    </source>
</reference>
<feature type="chain" id="PRO_1000053973" description="Uridylate kinase">
    <location>
        <begin position="1"/>
        <end position="242"/>
    </location>
</feature>
<feature type="region of interest" description="Involved in allosteric activation by GTP" evidence="1">
    <location>
        <begin position="23"/>
        <end position="28"/>
    </location>
</feature>
<feature type="binding site" evidence="1">
    <location>
        <begin position="15"/>
        <end position="18"/>
    </location>
    <ligand>
        <name>ATP</name>
        <dbReference type="ChEBI" id="CHEBI:30616"/>
    </ligand>
</feature>
<feature type="binding site" evidence="1">
    <location>
        <position position="57"/>
    </location>
    <ligand>
        <name>UMP</name>
        <dbReference type="ChEBI" id="CHEBI:57865"/>
    </ligand>
</feature>
<feature type="binding site" evidence="1">
    <location>
        <position position="58"/>
    </location>
    <ligand>
        <name>ATP</name>
        <dbReference type="ChEBI" id="CHEBI:30616"/>
    </ligand>
</feature>
<feature type="binding site" evidence="1">
    <location>
        <position position="62"/>
    </location>
    <ligand>
        <name>ATP</name>
        <dbReference type="ChEBI" id="CHEBI:30616"/>
    </ligand>
</feature>
<feature type="binding site" evidence="1">
    <location>
        <position position="77"/>
    </location>
    <ligand>
        <name>UMP</name>
        <dbReference type="ChEBI" id="CHEBI:57865"/>
    </ligand>
</feature>
<feature type="binding site" evidence="1">
    <location>
        <begin position="138"/>
        <end position="145"/>
    </location>
    <ligand>
        <name>UMP</name>
        <dbReference type="ChEBI" id="CHEBI:57865"/>
    </ligand>
</feature>
<feature type="binding site" evidence="1">
    <location>
        <position position="165"/>
    </location>
    <ligand>
        <name>ATP</name>
        <dbReference type="ChEBI" id="CHEBI:30616"/>
    </ligand>
</feature>
<feature type="binding site" evidence="1">
    <location>
        <position position="171"/>
    </location>
    <ligand>
        <name>ATP</name>
        <dbReference type="ChEBI" id="CHEBI:30616"/>
    </ligand>
</feature>
<feature type="binding site" evidence="1">
    <location>
        <position position="174"/>
    </location>
    <ligand>
        <name>ATP</name>
        <dbReference type="ChEBI" id="CHEBI:30616"/>
    </ligand>
</feature>
<sequence length="242" mass="26079">MATNAKPVYQRILLKLSGEALQGAEGFGIDASVLDRMAQEVKELVELGVEVGVVIGGGNLFRGAGLAEAGMNRVVGDHMGMLATVMNGLAMRDALHRAYVNARLMSAIPLNGVCDNYSWAEAISLLRHGRVVIFSAGTGNPFFTTDSAACLRGIEIEADVVLKATKVDGVYSADPAKDSEAVLFDKLSYQQVLERELKVMDLAAFTLARDHSLPIRVFNMNKPGALRRVVMGENEGTLIFHE</sequence>
<accession>Q7N8P5</accession>
<keyword id="KW-0021">Allosteric enzyme</keyword>
<keyword id="KW-0067">ATP-binding</keyword>
<keyword id="KW-0963">Cytoplasm</keyword>
<keyword id="KW-0418">Kinase</keyword>
<keyword id="KW-0547">Nucleotide-binding</keyword>
<keyword id="KW-0665">Pyrimidine biosynthesis</keyword>
<keyword id="KW-1185">Reference proteome</keyword>
<keyword id="KW-0808">Transferase</keyword>
<gene>
    <name evidence="1" type="primary">pyrH</name>
    <name type="ordered locus">plu0674</name>
</gene>
<comment type="function">
    <text evidence="1">Catalyzes the reversible phosphorylation of UMP to UDP.</text>
</comment>
<comment type="catalytic activity">
    <reaction evidence="1">
        <text>UMP + ATP = UDP + ADP</text>
        <dbReference type="Rhea" id="RHEA:24400"/>
        <dbReference type="ChEBI" id="CHEBI:30616"/>
        <dbReference type="ChEBI" id="CHEBI:57865"/>
        <dbReference type="ChEBI" id="CHEBI:58223"/>
        <dbReference type="ChEBI" id="CHEBI:456216"/>
        <dbReference type="EC" id="2.7.4.22"/>
    </reaction>
</comment>
<comment type="activity regulation">
    <text evidence="1">Allosterically activated by GTP. Inhibited by UTP.</text>
</comment>
<comment type="pathway">
    <text evidence="1">Pyrimidine metabolism; CTP biosynthesis via de novo pathway; UDP from UMP (UMPK route): step 1/1.</text>
</comment>
<comment type="subunit">
    <text evidence="1">Homohexamer.</text>
</comment>
<comment type="subcellular location">
    <subcellularLocation>
        <location evidence="1">Cytoplasm</location>
    </subcellularLocation>
</comment>
<comment type="similarity">
    <text evidence="1">Belongs to the UMP kinase family.</text>
</comment>
<proteinExistence type="inferred from homology"/>
<protein>
    <recommendedName>
        <fullName evidence="1">Uridylate kinase</fullName>
        <shortName evidence="1">UK</shortName>
        <ecNumber evidence="1">2.7.4.22</ecNumber>
    </recommendedName>
    <alternativeName>
        <fullName evidence="1">Uridine monophosphate kinase</fullName>
        <shortName evidence="1">UMP kinase</shortName>
        <shortName evidence="1">UMPK</shortName>
    </alternativeName>
</protein>
<evidence type="ECO:0000255" key="1">
    <source>
        <dbReference type="HAMAP-Rule" id="MF_01220"/>
    </source>
</evidence>
<name>PYRH_PHOLL</name>
<organism>
    <name type="scientific">Photorhabdus laumondii subsp. laumondii (strain DSM 15139 / CIP 105565 / TT01)</name>
    <name type="common">Photorhabdus luminescens subsp. laumondii</name>
    <dbReference type="NCBI Taxonomy" id="243265"/>
    <lineage>
        <taxon>Bacteria</taxon>
        <taxon>Pseudomonadati</taxon>
        <taxon>Pseudomonadota</taxon>
        <taxon>Gammaproteobacteria</taxon>
        <taxon>Enterobacterales</taxon>
        <taxon>Morganellaceae</taxon>
        <taxon>Photorhabdus</taxon>
    </lineage>
</organism>